<accession>B5R3T6</accession>
<organism>
    <name type="scientific">Salmonella enteritidis PT4 (strain P125109)</name>
    <dbReference type="NCBI Taxonomy" id="550537"/>
    <lineage>
        <taxon>Bacteria</taxon>
        <taxon>Pseudomonadati</taxon>
        <taxon>Pseudomonadota</taxon>
        <taxon>Gammaproteobacteria</taxon>
        <taxon>Enterobacterales</taxon>
        <taxon>Enterobacteriaceae</taxon>
        <taxon>Salmonella</taxon>
    </lineage>
</organism>
<proteinExistence type="inferred from homology"/>
<gene>
    <name evidence="1" type="primary">glk</name>
    <name type="ordered locus">SEN2389</name>
</gene>
<dbReference type="EC" id="2.7.1.2" evidence="1"/>
<dbReference type="EMBL" id="AM933172">
    <property type="protein sequence ID" value="CAR33975.1"/>
    <property type="molecule type" value="Genomic_DNA"/>
</dbReference>
<dbReference type="RefSeq" id="WP_000170380.1">
    <property type="nucleotide sequence ID" value="NC_011294.1"/>
</dbReference>
<dbReference type="SMR" id="B5R3T6"/>
<dbReference type="KEGG" id="set:SEN2389"/>
<dbReference type="HOGENOM" id="CLU_042582_1_0_6"/>
<dbReference type="Proteomes" id="UP000000613">
    <property type="component" value="Chromosome"/>
</dbReference>
<dbReference type="GO" id="GO:0005829">
    <property type="term" value="C:cytosol"/>
    <property type="evidence" value="ECO:0007669"/>
    <property type="project" value="TreeGrafter"/>
</dbReference>
<dbReference type="GO" id="GO:0005524">
    <property type="term" value="F:ATP binding"/>
    <property type="evidence" value="ECO:0007669"/>
    <property type="project" value="UniProtKB-UniRule"/>
</dbReference>
<dbReference type="GO" id="GO:0005536">
    <property type="term" value="F:D-glucose binding"/>
    <property type="evidence" value="ECO:0007669"/>
    <property type="project" value="InterPro"/>
</dbReference>
<dbReference type="GO" id="GO:0004340">
    <property type="term" value="F:glucokinase activity"/>
    <property type="evidence" value="ECO:0007669"/>
    <property type="project" value="UniProtKB-UniRule"/>
</dbReference>
<dbReference type="GO" id="GO:0006096">
    <property type="term" value="P:glycolytic process"/>
    <property type="evidence" value="ECO:0007669"/>
    <property type="project" value="UniProtKB-UniRule"/>
</dbReference>
<dbReference type="CDD" id="cd24008">
    <property type="entry name" value="ASKHA_NBD_GLK"/>
    <property type="match status" value="1"/>
</dbReference>
<dbReference type="FunFam" id="3.30.420.40:FF:000045">
    <property type="entry name" value="Glucokinase"/>
    <property type="match status" value="1"/>
</dbReference>
<dbReference type="FunFam" id="3.40.367.20:FF:000002">
    <property type="entry name" value="Glucokinase"/>
    <property type="match status" value="1"/>
</dbReference>
<dbReference type="Gene3D" id="3.30.420.40">
    <property type="match status" value="1"/>
</dbReference>
<dbReference type="Gene3D" id="3.40.367.20">
    <property type="match status" value="1"/>
</dbReference>
<dbReference type="HAMAP" id="MF_00524">
    <property type="entry name" value="Glucokinase"/>
    <property type="match status" value="1"/>
</dbReference>
<dbReference type="InterPro" id="IPR043129">
    <property type="entry name" value="ATPase_NBD"/>
</dbReference>
<dbReference type="InterPro" id="IPR050201">
    <property type="entry name" value="Bacterial_glucokinase"/>
</dbReference>
<dbReference type="InterPro" id="IPR003836">
    <property type="entry name" value="Glucokinase"/>
</dbReference>
<dbReference type="NCBIfam" id="TIGR00749">
    <property type="entry name" value="glk"/>
    <property type="match status" value="1"/>
</dbReference>
<dbReference type="NCBIfam" id="NF001414">
    <property type="entry name" value="PRK00292.1-1"/>
    <property type="match status" value="1"/>
</dbReference>
<dbReference type="NCBIfam" id="NF001416">
    <property type="entry name" value="PRK00292.1-3"/>
    <property type="match status" value="1"/>
</dbReference>
<dbReference type="PANTHER" id="PTHR47690">
    <property type="entry name" value="GLUCOKINASE"/>
    <property type="match status" value="1"/>
</dbReference>
<dbReference type="PANTHER" id="PTHR47690:SF1">
    <property type="entry name" value="GLUCOKINASE"/>
    <property type="match status" value="1"/>
</dbReference>
<dbReference type="Pfam" id="PF02685">
    <property type="entry name" value="Glucokinase"/>
    <property type="match status" value="1"/>
</dbReference>
<dbReference type="SUPFAM" id="SSF53067">
    <property type="entry name" value="Actin-like ATPase domain"/>
    <property type="match status" value="1"/>
</dbReference>
<evidence type="ECO:0000255" key="1">
    <source>
        <dbReference type="HAMAP-Rule" id="MF_00524"/>
    </source>
</evidence>
<feature type="chain" id="PRO_1000127719" description="Glucokinase">
    <location>
        <begin position="1"/>
        <end position="321"/>
    </location>
</feature>
<feature type="binding site" evidence="1">
    <location>
        <begin position="8"/>
        <end position="13"/>
    </location>
    <ligand>
        <name>ATP</name>
        <dbReference type="ChEBI" id="CHEBI:30616"/>
    </ligand>
</feature>
<reference key="1">
    <citation type="journal article" date="2008" name="Genome Res.">
        <title>Comparative genome analysis of Salmonella enteritidis PT4 and Salmonella gallinarum 287/91 provides insights into evolutionary and host adaptation pathways.</title>
        <authorList>
            <person name="Thomson N.R."/>
            <person name="Clayton D.J."/>
            <person name="Windhorst D."/>
            <person name="Vernikos G."/>
            <person name="Davidson S."/>
            <person name="Churcher C."/>
            <person name="Quail M.A."/>
            <person name="Stevens M."/>
            <person name="Jones M.A."/>
            <person name="Watson M."/>
            <person name="Barron A."/>
            <person name="Layton A."/>
            <person name="Pickard D."/>
            <person name="Kingsley R.A."/>
            <person name="Bignell A."/>
            <person name="Clark L."/>
            <person name="Harris B."/>
            <person name="Ormond D."/>
            <person name="Abdellah Z."/>
            <person name="Brooks K."/>
            <person name="Cherevach I."/>
            <person name="Chillingworth T."/>
            <person name="Woodward J."/>
            <person name="Norberczak H."/>
            <person name="Lord A."/>
            <person name="Arrowsmith C."/>
            <person name="Jagels K."/>
            <person name="Moule S."/>
            <person name="Mungall K."/>
            <person name="Saunders M."/>
            <person name="Whitehead S."/>
            <person name="Chabalgoity J.A."/>
            <person name="Maskell D."/>
            <person name="Humphreys T."/>
            <person name="Roberts M."/>
            <person name="Barrow P.A."/>
            <person name="Dougan G."/>
            <person name="Parkhill J."/>
        </authorList>
    </citation>
    <scope>NUCLEOTIDE SEQUENCE [LARGE SCALE GENOMIC DNA]</scope>
    <source>
        <strain>P125109</strain>
    </source>
</reference>
<comment type="catalytic activity">
    <reaction evidence="1">
        <text>D-glucose + ATP = D-glucose 6-phosphate + ADP + H(+)</text>
        <dbReference type="Rhea" id="RHEA:17825"/>
        <dbReference type="ChEBI" id="CHEBI:4167"/>
        <dbReference type="ChEBI" id="CHEBI:15378"/>
        <dbReference type="ChEBI" id="CHEBI:30616"/>
        <dbReference type="ChEBI" id="CHEBI:61548"/>
        <dbReference type="ChEBI" id="CHEBI:456216"/>
        <dbReference type="EC" id="2.7.1.2"/>
    </reaction>
</comment>
<comment type="subcellular location">
    <subcellularLocation>
        <location evidence="1">Cytoplasm</location>
    </subcellularLocation>
</comment>
<comment type="similarity">
    <text evidence="1">Belongs to the bacterial glucokinase family.</text>
</comment>
<protein>
    <recommendedName>
        <fullName evidence="1">Glucokinase</fullName>
        <ecNumber evidence="1">2.7.1.2</ecNumber>
    </recommendedName>
    <alternativeName>
        <fullName evidence="1">Glucose kinase</fullName>
    </alternativeName>
</protein>
<sequence length="321" mass="34595">MTKYALVGDVGGTNARLALCDIASGEISQAKTYSGLDYPSLEAVVRVYLDEHSVSVEDGCIAIACPITGDWVAMTNHTWAFSIAEMKKNLGFSHLEIINDFTAVSMAIPMLKKEHLIQFGGGEPVDGKPIAVYGAGTGLGVAHLVHVDKRWISLPGEGGHVDFAPNSEEEAMILEILRAEIGHVSAERVLSGPGLVNLYRAIVKSDNRLPENLRPKDITERALADSCIDCRRALSLFCVIMGRFGGDLALTMGTFGGVYIAGGIVPRFLEFFKASGFRGGFEDKGRFKDYVHGIPVYLIVHDNPGLLGSGAHLRQTLGHIL</sequence>
<name>GLK_SALEP</name>
<keyword id="KW-0067">ATP-binding</keyword>
<keyword id="KW-0963">Cytoplasm</keyword>
<keyword id="KW-0324">Glycolysis</keyword>
<keyword id="KW-0418">Kinase</keyword>
<keyword id="KW-0547">Nucleotide-binding</keyword>
<keyword id="KW-0808">Transferase</keyword>